<comment type="function">
    <text evidence="1">Part of the ABC transporter complex PhnCDE involved in phosphonates import. Responsible for energy coupling to the transport system.</text>
</comment>
<comment type="catalytic activity">
    <reaction evidence="1">
        <text>phosphonate(out) + ATP + H2O = phosphonate(in) + ADP + phosphate + H(+)</text>
        <dbReference type="Rhea" id="RHEA:18065"/>
        <dbReference type="ChEBI" id="CHEBI:15377"/>
        <dbReference type="ChEBI" id="CHEBI:15378"/>
        <dbReference type="ChEBI" id="CHEBI:16215"/>
        <dbReference type="ChEBI" id="CHEBI:30616"/>
        <dbReference type="ChEBI" id="CHEBI:43474"/>
        <dbReference type="ChEBI" id="CHEBI:456216"/>
        <dbReference type="EC" id="7.3.2.2"/>
    </reaction>
</comment>
<comment type="subunit">
    <text evidence="1">The complex is composed of two ATP-binding proteins (PhnC), two transmembrane proteins (PhnE) and a solute-binding protein (PhnD).</text>
</comment>
<comment type="subcellular location">
    <subcellularLocation>
        <location evidence="1">Cell inner membrane</location>
        <topology evidence="1">Peripheral membrane protein</topology>
    </subcellularLocation>
</comment>
<comment type="similarity">
    <text evidence="1">Belongs to the ABC transporter superfamily. Phosphonates importer (TC 3.A.1.9.1) family.</text>
</comment>
<dbReference type="EC" id="7.3.2.2" evidence="1"/>
<dbReference type="EMBL" id="CP000133">
    <property type="protein sequence ID" value="ABC88985.1"/>
    <property type="molecule type" value="Genomic_DNA"/>
</dbReference>
<dbReference type="RefSeq" id="WP_011423554.1">
    <property type="nucleotide sequence ID" value="NC_007761.1"/>
</dbReference>
<dbReference type="SMR" id="Q2KDV1"/>
<dbReference type="KEGG" id="ret:RHE_CH00160"/>
<dbReference type="eggNOG" id="COG3638">
    <property type="taxonomic scope" value="Bacteria"/>
</dbReference>
<dbReference type="HOGENOM" id="CLU_000604_1_22_5"/>
<dbReference type="Proteomes" id="UP000001936">
    <property type="component" value="Chromosome"/>
</dbReference>
<dbReference type="GO" id="GO:0005886">
    <property type="term" value="C:plasma membrane"/>
    <property type="evidence" value="ECO:0007669"/>
    <property type="project" value="UniProtKB-SubCell"/>
</dbReference>
<dbReference type="GO" id="GO:0015416">
    <property type="term" value="F:ABC-type phosphonate transporter activity"/>
    <property type="evidence" value="ECO:0007669"/>
    <property type="project" value="UniProtKB-EC"/>
</dbReference>
<dbReference type="GO" id="GO:0005524">
    <property type="term" value="F:ATP binding"/>
    <property type="evidence" value="ECO:0007669"/>
    <property type="project" value="UniProtKB-KW"/>
</dbReference>
<dbReference type="GO" id="GO:0016887">
    <property type="term" value="F:ATP hydrolysis activity"/>
    <property type="evidence" value="ECO:0007669"/>
    <property type="project" value="InterPro"/>
</dbReference>
<dbReference type="CDD" id="cd03256">
    <property type="entry name" value="ABC_PhnC_transporter"/>
    <property type="match status" value="1"/>
</dbReference>
<dbReference type="Gene3D" id="3.40.50.300">
    <property type="entry name" value="P-loop containing nucleotide triphosphate hydrolases"/>
    <property type="match status" value="1"/>
</dbReference>
<dbReference type="InterPro" id="IPR003593">
    <property type="entry name" value="AAA+_ATPase"/>
</dbReference>
<dbReference type="InterPro" id="IPR003439">
    <property type="entry name" value="ABC_transporter-like_ATP-bd"/>
</dbReference>
<dbReference type="InterPro" id="IPR017871">
    <property type="entry name" value="ABC_transporter-like_CS"/>
</dbReference>
<dbReference type="InterPro" id="IPR012693">
    <property type="entry name" value="ABC_transpr_PhnC"/>
</dbReference>
<dbReference type="InterPro" id="IPR050086">
    <property type="entry name" value="MetN_ABC_transporter-like"/>
</dbReference>
<dbReference type="InterPro" id="IPR027417">
    <property type="entry name" value="P-loop_NTPase"/>
</dbReference>
<dbReference type="NCBIfam" id="TIGR02315">
    <property type="entry name" value="ABC_phnC"/>
    <property type="match status" value="1"/>
</dbReference>
<dbReference type="PANTHER" id="PTHR43166">
    <property type="entry name" value="AMINO ACID IMPORT ATP-BINDING PROTEIN"/>
    <property type="match status" value="1"/>
</dbReference>
<dbReference type="PANTHER" id="PTHR43166:SF6">
    <property type="entry name" value="PHOSPHONATES IMPORT ATP-BINDING PROTEIN PHNC"/>
    <property type="match status" value="1"/>
</dbReference>
<dbReference type="Pfam" id="PF00005">
    <property type="entry name" value="ABC_tran"/>
    <property type="match status" value="1"/>
</dbReference>
<dbReference type="SMART" id="SM00382">
    <property type="entry name" value="AAA"/>
    <property type="match status" value="1"/>
</dbReference>
<dbReference type="SUPFAM" id="SSF52540">
    <property type="entry name" value="P-loop containing nucleoside triphosphate hydrolases"/>
    <property type="match status" value="1"/>
</dbReference>
<dbReference type="PROSITE" id="PS00211">
    <property type="entry name" value="ABC_TRANSPORTER_1"/>
    <property type="match status" value="1"/>
</dbReference>
<dbReference type="PROSITE" id="PS50893">
    <property type="entry name" value="ABC_TRANSPORTER_2"/>
    <property type="match status" value="1"/>
</dbReference>
<dbReference type="PROSITE" id="PS51249">
    <property type="entry name" value="PHNC"/>
    <property type="match status" value="1"/>
</dbReference>
<feature type="chain" id="PRO_0000274737" description="Phosphonates import ATP-binding protein PhnC">
    <location>
        <begin position="1"/>
        <end position="281"/>
    </location>
</feature>
<feature type="domain" description="ABC transporter" evidence="1">
    <location>
        <begin position="2"/>
        <end position="245"/>
    </location>
</feature>
<feature type="binding site" evidence="1">
    <location>
        <begin position="34"/>
        <end position="41"/>
    </location>
    <ligand>
        <name>ATP</name>
        <dbReference type="ChEBI" id="CHEBI:30616"/>
    </ligand>
</feature>
<proteinExistence type="inferred from homology"/>
<evidence type="ECO:0000255" key="1">
    <source>
        <dbReference type="HAMAP-Rule" id="MF_01713"/>
    </source>
</evidence>
<accession>Q2KDV1</accession>
<keyword id="KW-0067">ATP-binding</keyword>
<keyword id="KW-0997">Cell inner membrane</keyword>
<keyword id="KW-1003">Cell membrane</keyword>
<keyword id="KW-0472">Membrane</keyword>
<keyword id="KW-0547">Nucleotide-binding</keyword>
<keyword id="KW-0918">Phosphonate transport</keyword>
<keyword id="KW-1185">Reference proteome</keyword>
<keyword id="KW-1278">Translocase</keyword>
<keyword id="KW-0813">Transport</keyword>
<reference key="1">
    <citation type="journal article" date="2006" name="Proc. Natl. Acad. Sci. U.S.A.">
        <title>The partitioned Rhizobium etli genome: genetic and metabolic redundancy in seven interacting replicons.</title>
        <authorList>
            <person name="Gonzalez V."/>
            <person name="Santamaria R.I."/>
            <person name="Bustos P."/>
            <person name="Hernandez-Gonzalez I."/>
            <person name="Medrano-Soto A."/>
            <person name="Moreno-Hagelsieb G."/>
            <person name="Janga S.C."/>
            <person name="Ramirez M.A."/>
            <person name="Jimenez-Jacinto V."/>
            <person name="Collado-Vides J."/>
            <person name="Davila G."/>
        </authorList>
    </citation>
    <scope>NUCLEOTIDE SEQUENCE [LARGE SCALE GENOMIC DNA]</scope>
    <source>
        <strain>ATCC 51251 / DSM 11541 / JCM 21823 / NBRC 15573 / CFN 42</strain>
    </source>
</reference>
<sequence>MFELKDVTRRFGKKLAVDAVTLTIPQGQMVGIIGRSGAGKSTLLRMINRLQEPSSGSIHFAGVEVSGLRGRALRNWQRDCAMIFQQFNLVPRLDVLTNVMLGRLNHRSTLLSLLNIFTREERVHAIAALERLGIEQTALQPAGTLSGGQQQRVAIARALMQNPKMVLADEPIASLDPLNAKIVMDALRDINEREGITVVTNLHTLDTARNYCERIVGMAGGRVVFDGKPSDLTAEAVKEIYGTDKDGAGIDETMTSTSIDIAPERADNQSAGIQPLALAGL</sequence>
<name>PHNC_RHIEC</name>
<protein>
    <recommendedName>
        <fullName evidence="1">Phosphonates import ATP-binding protein PhnC</fullName>
        <ecNumber evidence="1">7.3.2.2</ecNumber>
    </recommendedName>
</protein>
<gene>
    <name evidence="1" type="primary">phnC</name>
    <name type="ordered locus">RHE_CH00160</name>
</gene>
<organism>
    <name type="scientific">Rhizobium etli (strain ATCC 51251 / DSM 11541 / JCM 21823 / NBRC 15573 / CFN 42)</name>
    <dbReference type="NCBI Taxonomy" id="347834"/>
    <lineage>
        <taxon>Bacteria</taxon>
        <taxon>Pseudomonadati</taxon>
        <taxon>Pseudomonadota</taxon>
        <taxon>Alphaproteobacteria</taxon>
        <taxon>Hyphomicrobiales</taxon>
        <taxon>Rhizobiaceae</taxon>
        <taxon>Rhizobium/Agrobacterium group</taxon>
        <taxon>Rhizobium</taxon>
    </lineage>
</organism>